<gene>
    <name evidence="1" type="primary">rpoC</name>
    <name type="ordered locus">Pden_0749</name>
</gene>
<reference key="1">
    <citation type="submission" date="2006-12" db="EMBL/GenBank/DDBJ databases">
        <title>Complete sequence of chromosome 1 of Paracoccus denitrificans PD1222.</title>
        <authorList>
            <person name="Copeland A."/>
            <person name="Lucas S."/>
            <person name="Lapidus A."/>
            <person name="Barry K."/>
            <person name="Detter J.C."/>
            <person name="Glavina del Rio T."/>
            <person name="Hammon N."/>
            <person name="Israni S."/>
            <person name="Dalin E."/>
            <person name="Tice H."/>
            <person name="Pitluck S."/>
            <person name="Munk A.C."/>
            <person name="Brettin T."/>
            <person name="Bruce D."/>
            <person name="Han C."/>
            <person name="Tapia R."/>
            <person name="Gilna P."/>
            <person name="Schmutz J."/>
            <person name="Larimer F."/>
            <person name="Land M."/>
            <person name="Hauser L."/>
            <person name="Kyrpides N."/>
            <person name="Lykidis A."/>
            <person name="Spiro S."/>
            <person name="Richardson D.J."/>
            <person name="Moir J.W.B."/>
            <person name="Ferguson S.J."/>
            <person name="van Spanning R.J.M."/>
            <person name="Richardson P."/>
        </authorList>
    </citation>
    <scope>NUCLEOTIDE SEQUENCE [LARGE SCALE GENOMIC DNA]</scope>
    <source>
        <strain>Pd 1222</strain>
    </source>
</reference>
<feature type="chain" id="PRO_0000353400" description="DNA-directed RNA polymerase subunit beta'">
    <location>
        <begin position="1"/>
        <end position="1402"/>
    </location>
</feature>
<feature type="binding site" evidence="1">
    <location>
        <position position="72"/>
    </location>
    <ligand>
        <name>Zn(2+)</name>
        <dbReference type="ChEBI" id="CHEBI:29105"/>
        <label>1</label>
    </ligand>
</feature>
<feature type="binding site" evidence="1">
    <location>
        <position position="74"/>
    </location>
    <ligand>
        <name>Zn(2+)</name>
        <dbReference type="ChEBI" id="CHEBI:29105"/>
        <label>1</label>
    </ligand>
</feature>
<feature type="binding site" evidence="1">
    <location>
        <position position="87"/>
    </location>
    <ligand>
        <name>Zn(2+)</name>
        <dbReference type="ChEBI" id="CHEBI:29105"/>
        <label>1</label>
    </ligand>
</feature>
<feature type="binding site" evidence="1">
    <location>
        <position position="90"/>
    </location>
    <ligand>
        <name>Zn(2+)</name>
        <dbReference type="ChEBI" id="CHEBI:29105"/>
        <label>1</label>
    </ligand>
</feature>
<feature type="binding site" evidence="1">
    <location>
        <position position="463"/>
    </location>
    <ligand>
        <name>Mg(2+)</name>
        <dbReference type="ChEBI" id="CHEBI:18420"/>
    </ligand>
</feature>
<feature type="binding site" evidence="1">
    <location>
        <position position="465"/>
    </location>
    <ligand>
        <name>Mg(2+)</name>
        <dbReference type="ChEBI" id="CHEBI:18420"/>
    </ligand>
</feature>
<feature type="binding site" evidence="1">
    <location>
        <position position="467"/>
    </location>
    <ligand>
        <name>Mg(2+)</name>
        <dbReference type="ChEBI" id="CHEBI:18420"/>
    </ligand>
</feature>
<feature type="binding site" evidence="1">
    <location>
        <position position="811"/>
    </location>
    <ligand>
        <name>Zn(2+)</name>
        <dbReference type="ChEBI" id="CHEBI:29105"/>
        <label>2</label>
    </ligand>
</feature>
<feature type="binding site" evidence="1">
    <location>
        <position position="885"/>
    </location>
    <ligand>
        <name>Zn(2+)</name>
        <dbReference type="ChEBI" id="CHEBI:29105"/>
        <label>2</label>
    </ligand>
</feature>
<feature type="binding site" evidence="1">
    <location>
        <position position="892"/>
    </location>
    <ligand>
        <name>Zn(2+)</name>
        <dbReference type="ChEBI" id="CHEBI:29105"/>
        <label>2</label>
    </ligand>
</feature>
<feature type="binding site" evidence="1">
    <location>
        <position position="895"/>
    </location>
    <ligand>
        <name>Zn(2+)</name>
        <dbReference type="ChEBI" id="CHEBI:29105"/>
        <label>2</label>
    </ligand>
</feature>
<proteinExistence type="inferred from homology"/>
<evidence type="ECO:0000255" key="1">
    <source>
        <dbReference type="HAMAP-Rule" id="MF_01322"/>
    </source>
</evidence>
<protein>
    <recommendedName>
        <fullName evidence="1">DNA-directed RNA polymerase subunit beta'</fullName>
        <shortName evidence="1">RNAP subunit beta'</shortName>
        <ecNumber evidence="1">2.7.7.6</ecNumber>
    </recommendedName>
    <alternativeName>
        <fullName evidence="1">RNA polymerase subunit beta'</fullName>
    </alternativeName>
    <alternativeName>
        <fullName evidence="1">Transcriptase subunit beta'</fullName>
    </alternativeName>
</protein>
<sequence>MNQELATNPLNPLAAPRQFDEIKISLASPEEILAWSYGEVKKPETINYRTFKPERDGLFCARIFGPIKDYECLCGKYKRMKYRGLVCEKCGVEVTLQKVRRERMGHIELAAPVAHIWFLKSLPSRIGLMLDMTLRDLERILYFENYVVIEPGLTDLSYGQLLTEEEFLDAQDQYGADAFTANIGAEAIREMLANIDLAATAEQLREELKEATGELKPKKIIKRLKIVESFLESGNRPEWMVLTVIPVIPPELRPLVPLDGGRFATSDLNDLYRRVINRNNRLKRLIELRAPDIIVRNEKRMLQESVDALFDNGRRGRVITGNNKRPLKSLSDMLKGKQGRFRQNLLGKRVDFSGRSVIVTGPELKLHQCGLPKKMALELFKPFIYSRLEAKGLSSTVKQAKKLVEKERPEVWDILDEVIREHPVLLNRAPTLHRLGIQAFEPILIEGKAIQLHPLVCSAFNADFDGDQMAVHVPLSLEAQLEARVLMMSTNNVLSPANGAPIIVPSQDMVLGLYYTTMEREGMKGEGMAFTSLEEVEHALASGAVHLHARITARLPQIDENGNEVITRFETTPGRLRLGALLPKNAKAPFELVNRLLRKKDIQNVIDTVYRYCGQKESVIFCDQIMGLGFREAFRAGISFGKDDMVVPPTKWDLVEETQDQVKQFEQQYLDGLITQGEKYNKVVDAWSKCNDRVTDAMMKTISATKKDEKGAELEPNSVYMMAHSGARGSVSQMKQLGGMRGLMAKPNGEIIETPIISNFKEGLTVLEYFNSTHGARKGLSDTALKTANSGYLTRRLVDVAQDCIIREHDCGTDHAITASAAVNDGEVVSPLSERVLGRVAAEDVLVPGEDVVIVRKNELIDERKADEIEAAGVQNVRIRSALTCESDDGVCALCYGRDLARGTLVNIGEAVGIIAAQSIGEPGTQLTMRTFHIGGIAQGGQQSFIAAAQEGTVAFENESTLENANGELIVMSRNMQLHIKSATGDTLASHKLFYGSKLFVREGDAVARGQKMFEWDPYTLPIIAEKAGVAKYVDLISGISVRDETDDATGMTQKIVTDWRSAPKGNELKPEIIIVDQDGEPVRNEQGNPVTYPMSVEAILSVEDGQEIKAGDVVARIPREGAKTKDITGGLPRVAELFEARRPKDHAIIAEIDGYVRFGKDYKNKRRIAIEPADDTLEPVEYMVPKGKHIPVQEGDFVQKGDYIMDGNPAPHDILRIMGIEALADYLIDEVQDVYRLQGVKINDKHIEVIVRQMLQKIEILDSGDTTLLKGEHVDRDEFEEENAKIEAKGGRQATGEPVLLGITKASLQTRSFISAASFQETTRVLTEAAVQGKRDKLVGLKENVIVGRLIPAGTGGATARVRRIATDRDQEVIEARRAEAEAAAALIAPEDTPAEVGGED</sequence>
<organism>
    <name type="scientific">Paracoccus denitrificans (strain Pd 1222)</name>
    <dbReference type="NCBI Taxonomy" id="318586"/>
    <lineage>
        <taxon>Bacteria</taxon>
        <taxon>Pseudomonadati</taxon>
        <taxon>Pseudomonadota</taxon>
        <taxon>Alphaproteobacteria</taxon>
        <taxon>Rhodobacterales</taxon>
        <taxon>Paracoccaceae</taxon>
        <taxon>Paracoccus</taxon>
    </lineage>
</organism>
<comment type="function">
    <text evidence="1">DNA-dependent RNA polymerase catalyzes the transcription of DNA into RNA using the four ribonucleoside triphosphates as substrates.</text>
</comment>
<comment type="catalytic activity">
    <reaction evidence="1">
        <text>RNA(n) + a ribonucleoside 5'-triphosphate = RNA(n+1) + diphosphate</text>
        <dbReference type="Rhea" id="RHEA:21248"/>
        <dbReference type="Rhea" id="RHEA-COMP:14527"/>
        <dbReference type="Rhea" id="RHEA-COMP:17342"/>
        <dbReference type="ChEBI" id="CHEBI:33019"/>
        <dbReference type="ChEBI" id="CHEBI:61557"/>
        <dbReference type="ChEBI" id="CHEBI:140395"/>
        <dbReference type="EC" id="2.7.7.6"/>
    </reaction>
</comment>
<comment type="cofactor">
    <cofactor evidence="1">
        <name>Mg(2+)</name>
        <dbReference type="ChEBI" id="CHEBI:18420"/>
    </cofactor>
    <text evidence="1">Binds 1 Mg(2+) ion per subunit.</text>
</comment>
<comment type="cofactor">
    <cofactor evidence="1">
        <name>Zn(2+)</name>
        <dbReference type="ChEBI" id="CHEBI:29105"/>
    </cofactor>
    <text evidence="1">Binds 2 Zn(2+) ions per subunit.</text>
</comment>
<comment type="subunit">
    <text evidence="1">The RNAP catalytic core consists of 2 alpha, 1 beta, 1 beta' and 1 omega subunit. When a sigma factor is associated with the core the holoenzyme is formed, which can initiate transcription.</text>
</comment>
<comment type="similarity">
    <text evidence="1">Belongs to the RNA polymerase beta' chain family.</text>
</comment>
<keyword id="KW-0240">DNA-directed RNA polymerase</keyword>
<keyword id="KW-0460">Magnesium</keyword>
<keyword id="KW-0479">Metal-binding</keyword>
<keyword id="KW-0548">Nucleotidyltransferase</keyword>
<keyword id="KW-1185">Reference proteome</keyword>
<keyword id="KW-0804">Transcription</keyword>
<keyword id="KW-0808">Transferase</keyword>
<keyword id="KW-0862">Zinc</keyword>
<dbReference type="EC" id="2.7.7.6" evidence="1"/>
<dbReference type="EMBL" id="CP000489">
    <property type="protein sequence ID" value="ABL68861.1"/>
    <property type="molecule type" value="Genomic_DNA"/>
</dbReference>
<dbReference type="RefSeq" id="WP_011747094.1">
    <property type="nucleotide sequence ID" value="NC_008686.1"/>
</dbReference>
<dbReference type="SMR" id="A1B017"/>
<dbReference type="STRING" id="318586.Pden_0749"/>
<dbReference type="EnsemblBacteria" id="ABL68861">
    <property type="protein sequence ID" value="ABL68861"/>
    <property type="gene ID" value="Pden_0749"/>
</dbReference>
<dbReference type="GeneID" id="93451973"/>
<dbReference type="KEGG" id="pde:Pden_0749"/>
<dbReference type="eggNOG" id="COG0086">
    <property type="taxonomic scope" value="Bacteria"/>
</dbReference>
<dbReference type="HOGENOM" id="CLU_000524_3_1_5"/>
<dbReference type="OrthoDB" id="9815296at2"/>
<dbReference type="Proteomes" id="UP000000361">
    <property type="component" value="Chromosome 1"/>
</dbReference>
<dbReference type="GO" id="GO:0000428">
    <property type="term" value="C:DNA-directed RNA polymerase complex"/>
    <property type="evidence" value="ECO:0007669"/>
    <property type="project" value="UniProtKB-KW"/>
</dbReference>
<dbReference type="GO" id="GO:0003677">
    <property type="term" value="F:DNA binding"/>
    <property type="evidence" value="ECO:0007669"/>
    <property type="project" value="UniProtKB-UniRule"/>
</dbReference>
<dbReference type="GO" id="GO:0003899">
    <property type="term" value="F:DNA-directed RNA polymerase activity"/>
    <property type="evidence" value="ECO:0007669"/>
    <property type="project" value="UniProtKB-UniRule"/>
</dbReference>
<dbReference type="GO" id="GO:0000287">
    <property type="term" value="F:magnesium ion binding"/>
    <property type="evidence" value="ECO:0007669"/>
    <property type="project" value="UniProtKB-UniRule"/>
</dbReference>
<dbReference type="GO" id="GO:0008270">
    <property type="term" value="F:zinc ion binding"/>
    <property type="evidence" value="ECO:0007669"/>
    <property type="project" value="UniProtKB-UniRule"/>
</dbReference>
<dbReference type="GO" id="GO:0006351">
    <property type="term" value="P:DNA-templated transcription"/>
    <property type="evidence" value="ECO:0007669"/>
    <property type="project" value="UniProtKB-UniRule"/>
</dbReference>
<dbReference type="CDD" id="cd02655">
    <property type="entry name" value="RNAP_beta'_C"/>
    <property type="match status" value="1"/>
</dbReference>
<dbReference type="CDD" id="cd01609">
    <property type="entry name" value="RNAP_beta'_N"/>
    <property type="match status" value="1"/>
</dbReference>
<dbReference type="Gene3D" id="1.10.132.30">
    <property type="match status" value="1"/>
</dbReference>
<dbReference type="Gene3D" id="1.10.150.390">
    <property type="match status" value="1"/>
</dbReference>
<dbReference type="Gene3D" id="1.10.1790.20">
    <property type="match status" value="1"/>
</dbReference>
<dbReference type="Gene3D" id="1.10.40.90">
    <property type="match status" value="1"/>
</dbReference>
<dbReference type="Gene3D" id="2.40.40.20">
    <property type="match status" value="1"/>
</dbReference>
<dbReference type="Gene3D" id="2.40.50.100">
    <property type="match status" value="3"/>
</dbReference>
<dbReference type="Gene3D" id="4.10.860.120">
    <property type="entry name" value="RNA polymerase II, clamp domain"/>
    <property type="match status" value="1"/>
</dbReference>
<dbReference type="Gene3D" id="1.10.274.100">
    <property type="entry name" value="RNA polymerase Rpb1, domain 3"/>
    <property type="match status" value="2"/>
</dbReference>
<dbReference type="HAMAP" id="MF_01322">
    <property type="entry name" value="RNApol_bact_RpoC"/>
    <property type="match status" value="1"/>
</dbReference>
<dbReference type="InterPro" id="IPR045867">
    <property type="entry name" value="DNA-dir_RpoC_beta_prime"/>
</dbReference>
<dbReference type="InterPro" id="IPR012754">
    <property type="entry name" value="DNA-dir_RpoC_beta_prime_bact"/>
</dbReference>
<dbReference type="InterPro" id="IPR000722">
    <property type="entry name" value="RNA_pol_asu"/>
</dbReference>
<dbReference type="InterPro" id="IPR006592">
    <property type="entry name" value="RNA_pol_N"/>
</dbReference>
<dbReference type="InterPro" id="IPR007080">
    <property type="entry name" value="RNA_pol_Rpb1_1"/>
</dbReference>
<dbReference type="InterPro" id="IPR007066">
    <property type="entry name" value="RNA_pol_Rpb1_3"/>
</dbReference>
<dbReference type="InterPro" id="IPR042102">
    <property type="entry name" value="RNA_pol_Rpb1_3_sf"/>
</dbReference>
<dbReference type="InterPro" id="IPR007083">
    <property type="entry name" value="RNA_pol_Rpb1_4"/>
</dbReference>
<dbReference type="InterPro" id="IPR007081">
    <property type="entry name" value="RNA_pol_Rpb1_5"/>
</dbReference>
<dbReference type="InterPro" id="IPR044893">
    <property type="entry name" value="RNA_pol_Rpb1_clamp_domain"/>
</dbReference>
<dbReference type="InterPro" id="IPR038120">
    <property type="entry name" value="Rpb1_funnel_sf"/>
</dbReference>
<dbReference type="NCBIfam" id="TIGR02386">
    <property type="entry name" value="rpoC_TIGR"/>
    <property type="match status" value="1"/>
</dbReference>
<dbReference type="PANTHER" id="PTHR19376">
    <property type="entry name" value="DNA-DIRECTED RNA POLYMERASE"/>
    <property type="match status" value="1"/>
</dbReference>
<dbReference type="PANTHER" id="PTHR19376:SF54">
    <property type="entry name" value="DNA-DIRECTED RNA POLYMERASE SUBUNIT BETA"/>
    <property type="match status" value="1"/>
</dbReference>
<dbReference type="Pfam" id="PF04997">
    <property type="entry name" value="RNA_pol_Rpb1_1"/>
    <property type="match status" value="1"/>
</dbReference>
<dbReference type="Pfam" id="PF00623">
    <property type="entry name" value="RNA_pol_Rpb1_2"/>
    <property type="match status" value="2"/>
</dbReference>
<dbReference type="Pfam" id="PF04983">
    <property type="entry name" value="RNA_pol_Rpb1_3"/>
    <property type="match status" value="1"/>
</dbReference>
<dbReference type="Pfam" id="PF05000">
    <property type="entry name" value="RNA_pol_Rpb1_4"/>
    <property type="match status" value="1"/>
</dbReference>
<dbReference type="Pfam" id="PF04998">
    <property type="entry name" value="RNA_pol_Rpb1_5"/>
    <property type="match status" value="1"/>
</dbReference>
<dbReference type="SMART" id="SM00663">
    <property type="entry name" value="RPOLA_N"/>
    <property type="match status" value="1"/>
</dbReference>
<dbReference type="SUPFAM" id="SSF64484">
    <property type="entry name" value="beta and beta-prime subunits of DNA dependent RNA-polymerase"/>
    <property type="match status" value="1"/>
</dbReference>
<accession>A1B017</accession>
<name>RPOC_PARDP</name>